<organism>
    <name type="scientific">Xanthomonas campestris pv. campestris (strain B100)</name>
    <dbReference type="NCBI Taxonomy" id="509169"/>
    <lineage>
        <taxon>Bacteria</taxon>
        <taxon>Pseudomonadati</taxon>
        <taxon>Pseudomonadota</taxon>
        <taxon>Gammaproteobacteria</taxon>
        <taxon>Lysobacterales</taxon>
        <taxon>Lysobacteraceae</taxon>
        <taxon>Xanthomonas</taxon>
    </lineage>
</organism>
<comment type="function">
    <text evidence="1">Catalyzes the ATP- as well as the pyrophosphate-dependent phosphorylation of a specific serine residue in HPr, a phosphocarrier protein of the phosphoenolpyruvate-dependent sugar phosphotransferase system (PTS). HprK/P also catalyzes the pyrophosphate-producing, inorganic phosphate-dependent dephosphorylation (phosphorolysis) of seryl-phosphorylated HPr (P-Ser-HPr).</text>
</comment>
<comment type="catalytic activity">
    <reaction evidence="1">
        <text>[HPr protein]-L-serine + ATP = [HPr protein]-O-phospho-L-serine + ADP + H(+)</text>
        <dbReference type="Rhea" id="RHEA:46600"/>
        <dbReference type="Rhea" id="RHEA-COMP:11602"/>
        <dbReference type="Rhea" id="RHEA-COMP:11603"/>
        <dbReference type="ChEBI" id="CHEBI:15378"/>
        <dbReference type="ChEBI" id="CHEBI:29999"/>
        <dbReference type="ChEBI" id="CHEBI:30616"/>
        <dbReference type="ChEBI" id="CHEBI:83421"/>
        <dbReference type="ChEBI" id="CHEBI:456216"/>
    </reaction>
</comment>
<comment type="catalytic activity">
    <reaction evidence="1">
        <text>[HPr protein]-O-phospho-L-serine + phosphate + H(+) = [HPr protein]-L-serine + diphosphate</text>
        <dbReference type="Rhea" id="RHEA:46604"/>
        <dbReference type="Rhea" id="RHEA-COMP:11602"/>
        <dbReference type="Rhea" id="RHEA-COMP:11603"/>
        <dbReference type="ChEBI" id="CHEBI:15378"/>
        <dbReference type="ChEBI" id="CHEBI:29999"/>
        <dbReference type="ChEBI" id="CHEBI:33019"/>
        <dbReference type="ChEBI" id="CHEBI:43474"/>
        <dbReference type="ChEBI" id="CHEBI:83421"/>
    </reaction>
</comment>
<comment type="cofactor">
    <cofactor evidence="1">
        <name>Mg(2+)</name>
        <dbReference type="ChEBI" id="CHEBI:18420"/>
    </cofactor>
</comment>
<comment type="subunit">
    <text evidence="1">Homohexamer.</text>
</comment>
<comment type="domain">
    <text evidence="1">The Walker A ATP-binding motif also binds Pi and PPi.</text>
</comment>
<comment type="miscellaneous">
    <text evidence="1">Both phosphorylation and phosphorolysis are carried out by the same active site and suggest a common mechanism for both reactions.</text>
</comment>
<comment type="similarity">
    <text evidence="1">Belongs to the HPrK/P family.</text>
</comment>
<sequence>MNTSITARELFDQQRDKLALRWVAGQKGEHREIQAGSNNARRPSLAGYLNVIYPNKVQILGTEELAWLDSLDARQRWETIEKIIQVQPLALAISKNQSCPEDLRAAADESNTPLWISPKRGHELLNHLSYHLARTLAPRVTLHGVFMEIYSIGVLITGEAGSGKSELALELLSRGHRLVADDAPEFTQIAPDVLDGTCPELLQDLLEVRGLGVLNVRDMFGDTAVKKNKYLRLIVHLTRPMTEPTPSGYERLTGDSGSRHVLDLDVPLITLPVMPGRNLAVLTEAATRLHILRTKGIDPAAMFIARHSNLLERRTP</sequence>
<protein>
    <recommendedName>
        <fullName evidence="1">HPr kinase/phosphorylase</fullName>
        <shortName evidence="1">HPrK/P</shortName>
        <ecNumber evidence="1">2.7.11.-</ecNumber>
        <ecNumber evidence="1">2.7.4.-</ecNumber>
    </recommendedName>
    <alternativeName>
        <fullName evidence="1">HPr(Ser) kinase/phosphorylase</fullName>
    </alternativeName>
</protein>
<reference key="1">
    <citation type="journal article" date="2008" name="J. Biotechnol.">
        <title>The genome of Xanthomonas campestris pv. campestris B100 and its use for the reconstruction of metabolic pathways involved in xanthan biosynthesis.</title>
        <authorList>
            <person name="Vorhoelter F.-J."/>
            <person name="Schneiker S."/>
            <person name="Goesmann A."/>
            <person name="Krause L."/>
            <person name="Bekel T."/>
            <person name="Kaiser O."/>
            <person name="Linke B."/>
            <person name="Patschkowski T."/>
            <person name="Rueckert C."/>
            <person name="Schmid J."/>
            <person name="Sidhu V.K."/>
            <person name="Sieber V."/>
            <person name="Tauch A."/>
            <person name="Watt S.A."/>
            <person name="Weisshaar B."/>
            <person name="Becker A."/>
            <person name="Niehaus K."/>
            <person name="Puehler A."/>
        </authorList>
    </citation>
    <scope>NUCLEOTIDE SEQUENCE [LARGE SCALE GENOMIC DNA]</scope>
    <source>
        <strain>B100</strain>
    </source>
</reference>
<gene>
    <name evidence="1" type="primary">hprK</name>
    <name type="ordered locus">xcc-b100_1355</name>
</gene>
<feature type="chain" id="PRO_1000139918" description="HPr kinase/phosphorylase">
    <location>
        <begin position="1"/>
        <end position="316"/>
    </location>
</feature>
<feature type="region of interest" description="Important for the catalytic mechanism of both phosphorylation and dephosphorylation" evidence="1">
    <location>
        <begin position="206"/>
        <end position="215"/>
    </location>
</feature>
<feature type="region of interest" description="Important for the catalytic mechanism of dephosphorylation" evidence="1">
    <location>
        <begin position="272"/>
        <end position="277"/>
    </location>
</feature>
<feature type="active site" evidence="1">
    <location>
        <position position="143"/>
    </location>
</feature>
<feature type="active site" evidence="1">
    <location>
        <position position="164"/>
    </location>
</feature>
<feature type="active site" description="Proton acceptor; for phosphorylation activity. Proton donor; for dephosphorylation activity" evidence="1">
    <location>
        <position position="182"/>
    </location>
</feature>
<feature type="active site" evidence="1">
    <location>
        <position position="251"/>
    </location>
</feature>
<feature type="binding site" evidence="1">
    <location>
        <begin position="158"/>
        <end position="165"/>
    </location>
    <ligand>
        <name>ATP</name>
        <dbReference type="ChEBI" id="CHEBI:30616"/>
    </ligand>
</feature>
<feature type="binding site" evidence="1">
    <location>
        <position position="165"/>
    </location>
    <ligand>
        <name>Mg(2+)</name>
        <dbReference type="ChEBI" id="CHEBI:18420"/>
    </ligand>
</feature>
<feature type="binding site" evidence="1">
    <location>
        <position position="207"/>
    </location>
    <ligand>
        <name>Mg(2+)</name>
        <dbReference type="ChEBI" id="CHEBI:18420"/>
    </ligand>
</feature>
<evidence type="ECO:0000255" key="1">
    <source>
        <dbReference type="HAMAP-Rule" id="MF_01249"/>
    </source>
</evidence>
<keyword id="KW-0067">ATP-binding</keyword>
<keyword id="KW-0418">Kinase</keyword>
<keyword id="KW-0460">Magnesium</keyword>
<keyword id="KW-0479">Metal-binding</keyword>
<keyword id="KW-0511">Multifunctional enzyme</keyword>
<keyword id="KW-0547">Nucleotide-binding</keyword>
<keyword id="KW-0723">Serine/threonine-protein kinase</keyword>
<keyword id="KW-0808">Transferase</keyword>
<proteinExistence type="inferred from homology"/>
<dbReference type="EC" id="2.7.11.-" evidence="1"/>
<dbReference type="EC" id="2.7.4.-" evidence="1"/>
<dbReference type="EMBL" id="AM920689">
    <property type="protein sequence ID" value="CAP50705.1"/>
    <property type="molecule type" value="Genomic_DNA"/>
</dbReference>
<dbReference type="SMR" id="B0RQH0"/>
<dbReference type="KEGG" id="xca:xcc-b100_1355"/>
<dbReference type="HOGENOM" id="CLU_052030_0_2_6"/>
<dbReference type="Proteomes" id="UP000001188">
    <property type="component" value="Chromosome"/>
</dbReference>
<dbReference type="GO" id="GO:0005524">
    <property type="term" value="F:ATP binding"/>
    <property type="evidence" value="ECO:0007669"/>
    <property type="project" value="UniProtKB-UniRule"/>
</dbReference>
<dbReference type="GO" id="GO:0000287">
    <property type="term" value="F:magnesium ion binding"/>
    <property type="evidence" value="ECO:0007669"/>
    <property type="project" value="UniProtKB-UniRule"/>
</dbReference>
<dbReference type="GO" id="GO:0000155">
    <property type="term" value="F:phosphorelay sensor kinase activity"/>
    <property type="evidence" value="ECO:0007669"/>
    <property type="project" value="InterPro"/>
</dbReference>
<dbReference type="GO" id="GO:0004674">
    <property type="term" value="F:protein serine/threonine kinase activity"/>
    <property type="evidence" value="ECO:0007669"/>
    <property type="project" value="UniProtKB-KW"/>
</dbReference>
<dbReference type="GO" id="GO:0004712">
    <property type="term" value="F:protein serine/threonine/tyrosine kinase activity"/>
    <property type="evidence" value="ECO:0007669"/>
    <property type="project" value="UniProtKB-UniRule"/>
</dbReference>
<dbReference type="GO" id="GO:0006109">
    <property type="term" value="P:regulation of carbohydrate metabolic process"/>
    <property type="evidence" value="ECO:0007669"/>
    <property type="project" value="UniProtKB-UniRule"/>
</dbReference>
<dbReference type="CDD" id="cd01918">
    <property type="entry name" value="HprK_C"/>
    <property type="match status" value="1"/>
</dbReference>
<dbReference type="FunFam" id="3.40.50.300:FF:000174">
    <property type="entry name" value="HPr kinase/phosphorylase"/>
    <property type="match status" value="1"/>
</dbReference>
<dbReference type="Gene3D" id="3.40.1390.20">
    <property type="entry name" value="HprK N-terminal domain-like"/>
    <property type="match status" value="1"/>
</dbReference>
<dbReference type="Gene3D" id="3.40.50.300">
    <property type="entry name" value="P-loop containing nucleotide triphosphate hydrolases"/>
    <property type="match status" value="1"/>
</dbReference>
<dbReference type="HAMAP" id="MF_01249">
    <property type="entry name" value="HPr_kinase"/>
    <property type="match status" value="1"/>
</dbReference>
<dbReference type="InterPro" id="IPR003755">
    <property type="entry name" value="HPr(Ser)_kin/Pase"/>
</dbReference>
<dbReference type="InterPro" id="IPR011104">
    <property type="entry name" value="Hpr_kin/Pase_C"/>
</dbReference>
<dbReference type="InterPro" id="IPR011126">
    <property type="entry name" value="Hpr_kin/Pase_Hpr_N"/>
</dbReference>
<dbReference type="InterPro" id="IPR027417">
    <property type="entry name" value="P-loop_NTPase"/>
</dbReference>
<dbReference type="InterPro" id="IPR028979">
    <property type="entry name" value="Ser_kin/Pase_Hpr-like_N_sf"/>
</dbReference>
<dbReference type="NCBIfam" id="TIGR00679">
    <property type="entry name" value="hpr-ser"/>
    <property type="match status" value="1"/>
</dbReference>
<dbReference type="PANTHER" id="PTHR30305:SF1">
    <property type="entry name" value="HPR KINASE_PHOSPHORYLASE"/>
    <property type="match status" value="1"/>
</dbReference>
<dbReference type="PANTHER" id="PTHR30305">
    <property type="entry name" value="PROTEIN YJDM-RELATED"/>
    <property type="match status" value="1"/>
</dbReference>
<dbReference type="Pfam" id="PF07475">
    <property type="entry name" value="Hpr_kinase_C"/>
    <property type="match status" value="1"/>
</dbReference>
<dbReference type="Pfam" id="PF02603">
    <property type="entry name" value="Hpr_kinase_N"/>
    <property type="match status" value="1"/>
</dbReference>
<dbReference type="SUPFAM" id="SSF75138">
    <property type="entry name" value="HprK N-terminal domain-like"/>
    <property type="match status" value="1"/>
</dbReference>
<dbReference type="SUPFAM" id="SSF53795">
    <property type="entry name" value="PEP carboxykinase-like"/>
    <property type="match status" value="1"/>
</dbReference>
<accession>B0RQH0</accession>
<name>HPRK_XANCB</name>